<sequence length="199" mass="21726">MRTSHMLEQLMEALRCLPGVGPKSAQRMAFHLLQRDRKGGLQLADALSQSMTEIGHCAECRTFTEEEVCHICTNPKRQENGQICVVESPADIAAVEATGQYSGRYFVLMGHLSPLDGIGPSDIGLDVLDYRLRRGDISEVILATNPTVEGEATAHYIAELCREHQVEASRIAHGVPVGGELELVDGTTLSHSLLGRHKI</sequence>
<reference key="1">
    <citation type="journal article" date="2003" name="Lancet">
        <title>Genome sequence of Vibrio parahaemolyticus: a pathogenic mechanism distinct from that of V. cholerae.</title>
        <authorList>
            <person name="Makino K."/>
            <person name="Oshima K."/>
            <person name="Kurokawa K."/>
            <person name="Yokoyama K."/>
            <person name="Uda T."/>
            <person name="Tagomori K."/>
            <person name="Iijima Y."/>
            <person name="Najima M."/>
            <person name="Nakano M."/>
            <person name="Yamashita A."/>
            <person name="Kubota Y."/>
            <person name="Kimura S."/>
            <person name="Yasunaga T."/>
            <person name="Honda T."/>
            <person name="Shinagawa H."/>
            <person name="Hattori M."/>
            <person name="Iida T."/>
        </authorList>
    </citation>
    <scope>NUCLEOTIDE SEQUENCE [LARGE SCALE GENOMIC DNA]</scope>
    <source>
        <strain>RIMD 2210633</strain>
    </source>
</reference>
<protein>
    <recommendedName>
        <fullName evidence="1">Recombination protein RecR</fullName>
    </recommendedName>
</protein>
<comment type="function">
    <text evidence="1">May play a role in DNA repair. It seems to be involved in an RecBC-independent recombinational process of DNA repair. It may act with RecF and RecO.</text>
</comment>
<comment type="similarity">
    <text evidence="1">Belongs to the RecR family.</text>
</comment>
<proteinExistence type="inferred from homology"/>
<gene>
    <name evidence="1" type="primary">recR</name>
    <name type="ordered locus">VP2177</name>
</gene>
<name>RECR_VIBPA</name>
<dbReference type="EMBL" id="BA000031">
    <property type="protein sequence ID" value="BAC60440.1"/>
    <property type="molecule type" value="Genomic_DNA"/>
</dbReference>
<dbReference type="RefSeq" id="NP_798556.1">
    <property type="nucleotide sequence ID" value="NC_004603.1"/>
</dbReference>
<dbReference type="RefSeq" id="WP_005460088.1">
    <property type="nucleotide sequence ID" value="NC_004603.1"/>
</dbReference>
<dbReference type="SMR" id="Q87MQ4"/>
<dbReference type="GeneID" id="1189690"/>
<dbReference type="KEGG" id="vpa:VP2177"/>
<dbReference type="PATRIC" id="fig|223926.6.peg.2081"/>
<dbReference type="eggNOG" id="COG0353">
    <property type="taxonomic scope" value="Bacteria"/>
</dbReference>
<dbReference type="HOGENOM" id="CLU_060739_1_2_6"/>
<dbReference type="Proteomes" id="UP000002493">
    <property type="component" value="Chromosome 1"/>
</dbReference>
<dbReference type="GO" id="GO:0003677">
    <property type="term" value="F:DNA binding"/>
    <property type="evidence" value="ECO:0007669"/>
    <property type="project" value="UniProtKB-UniRule"/>
</dbReference>
<dbReference type="GO" id="GO:0008270">
    <property type="term" value="F:zinc ion binding"/>
    <property type="evidence" value="ECO:0007669"/>
    <property type="project" value="UniProtKB-KW"/>
</dbReference>
<dbReference type="GO" id="GO:0006310">
    <property type="term" value="P:DNA recombination"/>
    <property type="evidence" value="ECO:0007669"/>
    <property type="project" value="UniProtKB-UniRule"/>
</dbReference>
<dbReference type="GO" id="GO:0006281">
    <property type="term" value="P:DNA repair"/>
    <property type="evidence" value="ECO:0007669"/>
    <property type="project" value="UniProtKB-UniRule"/>
</dbReference>
<dbReference type="CDD" id="cd01025">
    <property type="entry name" value="TOPRIM_recR"/>
    <property type="match status" value="1"/>
</dbReference>
<dbReference type="FunFam" id="1.10.8.420:FF:000001">
    <property type="entry name" value="Recombination protein RecR"/>
    <property type="match status" value="1"/>
</dbReference>
<dbReference type="FunFam" id="3.40.1360.10:FF:000001">
    <property type="entry name" value="Recombination protein RecR"/>
    <property type="match status" value="1"/>
</dbReference>
<dbReference type="Gene3D" id="3.40.1360.10">
    <property type="match status" value="1"/>
</dbReference>
<dbReference type="Gene3D" id="6.10.250.240">
    <property type="match status" value="1"/>
</dbReference>
<dbReference type="Gene3D" id="1.10.8.420">
    <property type="entry name" value="RecR Domain 1"/>
    <property type="match status" value="1"/>
</dbReference>
<dbReference type="HAMAP" id="MF_00017">
    <property type="entry name" value="RecR"/>
    <property type="match status" value="1"/>
</dbReference>
<dbReference type="InterPro" id="IPR000093">
    <property type="entry name" value="DNA_Rcmb_RecR"/>
</dbReference>
<dbReference type="InterPro" id="IPR023627">
    <property type="entry name" value="Rcmb_RecR"/>
</dbReference>
<dbReference type="InterPro" id="IPR015967">
    <property type="entry name" value="Rcmb_RecR_Znf"/>
</dbReference>
<dbReference type="InterPro" id="IPR006171">
    <property type="entry name" value="TOPRIM_dom"/>
</dbReference>
<dbReference type="InterPro" id="IPR034137">
    <property type="entry name" value="TOPRIM_RecR"/>
</dbReference>
<dbReference type="NCBIfam" id="TIGR00615">
    <property type="entry name" value="recR"/>
    <property type="match status" value="1"/>
</dbReference>
<dbReference type="PANTHER" id="PTHR30446">
    <property type="entry name" value="RECOMBINATION PROTEIN RECR"/>
    <property type="match status" value="1"/>
</dbReference>
<dbReference type="PANTHER" id="PTHR30446:SF0">
    <property type="entry name" value="RECOMBINATION PROTEIN RECR"/>
    <property type="match status" value="1"/>
</dbReference>
<dbReference type="Pfam" id="PF21175">
    <property type="entry name" value="RecR_C"/>
    <property type="match status" value="1"/>
</dbReference>
<dbReference type="Pfam" id="PF21176">
    <property type="entry name" value="RecR_HhH"/>
    <property type="match status" value="1"/>
</dbReference>
<dbReference type="Pfam" id="PF02132">
    <property type="entry name" value="RecR_ZnF"/>
    <property type="match status" value="1"/>
</dbReference>
<dbReference type="Pfam" id="PF13662">
    <property type="entry name" value="Toprim_4"/>
    <property type="match status" value="1"/>
</dbReference>
<dbReference type="SMART" id="SM00493">
    <property type="entry name" value="TOPRIM"/>
    <property type="match status" value="1"/>
</dbReference>
<dbReference type="SUPFAM" id="SSF111304">
    <property type="entry name" value="Recombination protein RecR"/>
    <property type="match status" value="1"/>
</dbReference>
<dbReference type="PROSITE" id="PS01300">
    <property type="entry name" value="RECR"/>
    <property type="match status" value="1"/>
</dbReference>
<dbReference type="PROSITE" id="PS50880">
    <property type="entry name" value="TOPRIM"/>
    <property type="match status" value="1"/>
</dbReference>
<organism>
    <name type="scientific">Vibrio parahaemolyticus serotype O3:K6 (strain RIMD 2210633)</name>
    <dbReference type="NCBI Taxonomy" id="223926"/>
    <lineage>
        <taxon>Bacteria</taxon>
        <taxon>Pseudomonadati</taxon>
        <taxon>Pseudomonadota</taxon>
        <taxon>Gammaproteobacteria</taxon>
        <taxon>Vibrionales</taxon>
        <taxon>Vibrionaceae</taxon>
        <taxon>Vibrio</taxon>
    </lineage>
</organism>
<feature type="chain" id="PRO_0000190422" description="Recombination protein RecR">
    <location>
        <begin position="1"/>
        <end position="199"/>
    </location>
</feature>
<feature type="domain" description="Toprim" evidence="1">
    <location>
        <begin position="81"/>
        <end position="176"/>
    </location>
</feature>
<feature type="zinc finger region" description="C4-type" evidence="1">
    <location>
        <begin position="57"/>
        <end position="72"/>
    </location>
</feature>
<keyword id="KW-0227">DNA damage</keyword>
<keyword id="KW-0233">DNA recombination</keyword>
<keyword id="KW-0234">DNA repair</keyword>
<keyword id="KW-0479">Metal-binding</keyword>
<keyword id="KW-0862">Zinc</keyword>
<keyword id="KW-0863">Zinc-finger</keyword>
<evidence type="ECO:0000255" key="1">
    <source>
        <dbReference type="HAMAP-Rule" id="MF_00017"/>
    </source>
</evidence>
<accession>Q87MQ4</accession>